<dbReference type="EMBL" id="CU458896">
    <property type="protein sequence ID" value="CAM63845.1"/>
    <property type="molecule type" value="Genomic_DNA"/>
</dbReference>
<dbReference type="RefSeq" id="WP_005080548.1">
    <property type="nucleotide sequence ID" value="NZ_MLCG01000001.1"/>
</dbReference>
<dbReference type="SMR" id="B1MGA0"/>
<dbReference type="GeneID" id="93380710"/>
<dbReference type="KEGG" id="mab:MAB_3771c"/>
<dbReference type="Proteomes" id="UP000007137">
    <property type="component" value="Chromosome"/>
</dbReference>
<dbReference type="GO" id="GO:0015935">
    <property type="term" value="C:small ribosomal subunit"/>
    <property type="evidence" value="ECO:0007669"/>
    <property type="project" value="InterPro"/>
</dbReference>
<dbReference type="GO" id="GO:0019843">
    <property type="term" value="F:rRNA binding"/>
    <property type="evidence" value="ECO:0007669"/>
    <property type="project" value="UniProtKB-UniRule"/>
</dbReference>
<dbReference type="GO" id="GO:0003735">
    <property type="term" value="F:structural constituent of ribosome"/>
    <property type="evidence" value="ECO:0007669"/>
    <property type="project" value="InterPro"/>
</dbReference>
<dbReference type="GO" id="GO:0042274">
    <property type="term" value="P:ribosomal small subunit biogenesis"/>
    <property type="evidence" value="ECO:0007669"/>
    <property type="project" value="TreeGrafter"/>
</dbReference>
<dbReference type="GO" id="GO:0006412">
    <property type="term" value="P:translation"/>
    <property type="evidence" value="ECO:0007669"/>
    <property type="project" value="UniProtKB-UniRule"/>
</dbReference>
<dbReference type="CDD" id="cd00165">
    <property type="entry name" value="S4"/>
    <property type="match status" value="1"/>
</dbReference>
<dbReference type="FunFam" id="3.10.290.10:FF:000001">
    <property type="entry name" value="30S ribosomal protein S4"/>
    <property type="match status" value="1"/>
</dbReference>
<dbReference type="Gene3D" id="1.10.1050.10">
    <property type="entry name" value="Ribosomal Protein S4 Delta 41, Chain A, domain 1"/>
    <property type="match status" value="1"/>
</dbReference>
<dbReference type="Gene3D" id="3.10.290.10">
    <property type="entry name" value="RNA-binding S4 domain"/>
    <property type="match status" value="1"/>
</dbReference>
<dbReference type="HAMAP" id="MF_01306_B">
    <property type="entry name" value="Ribosomal_uS4_B"/>
    <property type="match status" value="1"/>
</dbReference>
<dbReference type="InterPro" id="IPR022801">
    <property type="entry name" value="Ribosomal_uS4"/>
</dbReference>
<dbReference type="InterPro" id="IPR005709">
    <property type="entry name" value="Ribosomal_uS4_bac-type"/>
</dbReference>
<dbReference type="InterPro" id="IPR018079">
    <property type="entry name" value="Ribosomal_uS4_CS"/>
</dbReference>
<dbReference type="InterPro" id="IPR001912">
    <property type="entry name" value="Ribosomal_uS4_N"/>
</dbReference>
<dbReference type="InterPro" id="IPR002942">
    <property type="entry name" value="S4_RNA-bd"/>
</dbReference>
<dbReference type="InterPro" id="IPR036986">
    <property type="entry name" value="S4_RNA-bd_sf"/>
</dbReference>
<dbReference type="NCBIfam" id="NF003717">
    <property type="entry name" value="PRK05327.1"/>
    <property type="match status" value="1"/>
</dbReference>
<dbReference type="NCBIfam" id="TIGR01017">
    <property type="entry name" value="rpsD_bact"/>
    <property type="match status" value="1"/>
</dbReference>
<dbReference type="PANTHER" id="PTHR11831">
    <property type="entry name" value="30S 40S RIBOSOMAL PROTEIN"/>
    <property type="match status" value="1"/>
</dbReference>
<dbReference type="PANTHER" id="PTHR11831:SF4">
    <property type="entry name" value="SMALL RIBOSOMAL SUBUNIT PROTEIN US4M"/>
    <property type="match status" value="1"/>
</dbReference>
<dbReference type="Pfam" id="PF00163">
    <property type="entry name" value="Ribosomal_S4"/>
    <property type="match status" value="1"/>
</dbReference>
<dbReference type="Pfam" id="PF01479">
    <property type="entry name" value="S4"/>
    <property type="match status" value="1"/>
</dbReference>
<dbReference type="SMART" id="SM01390">
    <property type="entry name" value="Ribosomal_S4"/>
    <property type="match status" value="1"/>
</dbReference>
<dbReference type="SMART" id="SM00363">
    <property type="entry name" value="S4"/>
    <property type="match status" value="1"/>
</dbReference>
<dbReference type="SUPFAM" id="SSF55174">
    <property type="entry name" value="Alpha-L RNA-binding motif"/>
    <property type="match status" value="1"/>
</dbReference>
<dbReference type="PROSITE" id="PS00632">
    <property type="entry name" value="RIBOSOMAL_S4"/>
    <property type="match status" value="1"/>
</dbReference>
<dbReference type="PROSITE" id="PS50889">
    <property type="entry name" value="S4"/>
    <property type="match status" value="1"/>
</dbReference>
<reference key="1">
    <citation type="journal article" date="2009" name="PLoS ONE">
        <title>Non mycobacterial virulence genes in the genome of the emerging pathogen Mycobacterium abscessus.</title>
        <authorList>
            <person name="Ripoll F."/>
            <person name="Pasek S."/>
            <person name="Schenowitz C."/>
            <person name="Dossat C."/>
            <person name="Barbe V."/>
            <person name="Rottman M."/>
            <person name="Macheras E."/>
            <person name="Heym B."/>
            <person name="Herrmann J.L."/>
            <person name="Daffe M."/>
            <person name="Brosch R."/>
            <person name="Risler J.L."/>
            <person name="Gaillard J.L."/>
        </authorList>
    </citation>
    <scope>NUCLEOTIDE SEQUENCE [LARGE SCALE GENOMIC DNA]</scope>
    <source>
        <strain>ATCC 19977 / DSM 44196 / CCUG 20993 / CIP 104536 / JCM 13569 / NCTC 13031 / TMC 1543 / L948</strain>
    </source>
</reference>
<proteinExistence type="inferred from homology"/>
<comment type="function">
    <text evidence="1">One of the primary rRNA binding proteins, it binds directly to 16S rRNA where it nucleates assembly of the body of the 30S subunit.</text>
</comment>
<comment type="function">
    <text evidence="1">With S5 and S12 plays an important role in translational accuracy.</text>
</comment>
<comment type="subunit">
    <text evidence="1">Part of the 30S ribosomal subunit. Contacts protein S5. The interaction surface between S4 and S5 is involved in control of translational fidelity.</text>
</comment>
<comment type="similarity">
    <text evidence="1">Belongs to the universal ribosomal protein uS4 family.</text>
</comment>
<organism>
    <name type="scientific">Mycobacteroides abscessus (strain ATCC 19977 / DSM 44196 / CCUG 20993 / CIP 104536 / JCM 13569 / NCTC 13031 / TMC 1543 / L948)</name>
    <name type="common">Mycobacterium abscessus</name>
    <dbReference type="NCBI Taxonomy" id="561007"/>
    <lineage>
        <taxon>Bacteria</taxon>
        <taxon>Bacillati</taxon>
        <taxon>Actinomycetota</taxon>
        <taxon>Actinomycetes</taxon>
        <taxon>Mycobacteriales</taxon>
        <taxon>Mycobacteriaceae</taxon>
        <taxon>Mycobacteroides</taxon>
        <taxon>Mycobacteroides abscessus</taxon>
    </lineage>
</organism>
<evidence type="ECO:0000255" key="1">
    <source>
        <dbReference type="HAMAP-Rule" id="MF_01306"/>
    </source>
</evidence>
<evidence type="ECO:0000256" key="2">
    <source>
        <dbReference type="SAM" id="MobiDB-lite"/>
    </source>
</evidence>
<evidence type="ECO:0000305" key="3"/>
<protein>
    <recommendedName>
        <fullName evidence="1">Small ribosomal subunit protein uS4</fullName>
    </recommendedName>
    <alternativeName>
        <fullName evidence="3">30S ribosomal protein S4</fullName>
    </alternativeName>
</protein>
<gene>
    <name evidence="1" type="primary">rpsD</name>
    <name type="ordered locus">MAB_3771c</name>
</gene>
<accession>B1MGA0</accession>
<name>RS4_MYCA9</name>
<keyword id="KW-1185">Reference proteome</keyword>
<keyword id="KW-0687">Ribonucleoprotein</keyword>
<keyword id="KW-0689">Ribosomal protein</keyword>
<keyword id="KW-0694">RNA-binding</keyword>
<keyword id="KW-0699">rRNA-binding</keyword>
<sequence>MARYTGPVTRKSRRLGVDLVGGSSAYEKRPYPPGQHGRARIKESEYRQQLQEKQKARFTYGVMEKQFRRYYAEAVRSSGKTGEQLLQILESRLDNVVYRAGLARTRRMARQLVSHGHFTVNNVKVDVPSYRVSQYDIIDIKPKSLNTLPFEVARETAGERPIPGWLQVVGERQRILVHQLPERAQIDVPLAEQLIVEFYSK</sequence>
<feature type="chain" id="PRO_1000140762" description="Small ribosomal subunit protein uS4">
    <location>
        <begin position="1"/>
        <end position="201"/>
    </location>
</feature>
<feature type="domain" description="S4 RNA-binding" evidence="1">
    <location>
        <begin position="91"/>
        <end position="157"/>
    </location>
</feature>
<feature type="region of interest" description="Disordered" evidence="2">
    <location>
        <begin position="19"/>
        <end position="41"/>
    </location>
</feature>